<keyword id="KW-0145">Chemotaxis</keyword>
<keyword id="KW-0963">Cytoplasm</keyword>
<keyword id="KW-0378">Hydrolase</keyword>
<keyword id="KW-0597">Phosphoprotein</keyword>
<comment type="function">
    <text evidence="1">Involved in chemotaxis. Part of a chemotaxis signal transduction system that modulates chemotaxis in response to various stimuli. Catalyzes the demethylation of specific methylglutamate residues introduced into the chemoreceptors (methyl-accepting chemotaxis proteins or MCP) by CheR. Also mediates the irreversible deamidation of specific glutamine residues to glutamic acid.</text>
</comment>
<comment type="catalytic activity">
    <reaction evidence="1">
        <text>[protein]-L-glutamate 5-O-methyl ester + H2O = L-glutamyl-[protein] + methanol + H(+)</text>
        <dbReference type="Rhea" id="RHEA:23236"/>
        <dbReference type="Rhea" id="RHEA-COMP:10208"/>
        <dbReference type="Rhea" id="RHEA-COMP:10311"/>
        <dbReference type="ChEBI" id="CHEBI:15377"/>
        <dbReference type="ChEBI" id="CHEBI:15378"/>
        <dbReference type="ChEBI" id="CHEBI:17790"/>
        <dbReference type="ChEBI" id="CHEBI:29973"/>
        <dbReference type="ChEBI" id="CHEBI:82795"/>
        <dbReference type="EC" id="3.1.1.61"/>
    </reaction>
</comment>
<comment type="catalytic activity">
    <reaction evidence="1">
        <text>L-glutaminyl-[protein] + H2O = L-glutamyl-[protein] + NH4(+)</text>
        <dbReference type="Rhea" id="RHEA:16441"/>
        <dbReference type="Rhea" id="RHEA-COMP:10207"/>
        <dbReference type="Rhea" id="RHEA-COMP:10208"/>
        <dbReference type="ChEBI" id="CHEBI:15377"/>
        <dbReference type="ChEBI" id="CHEBI:28938"/>
        <dbReference type="ChEBI" id="CHEBI:29973"/>
        <dbReference type="ChEBI" id="CHEBI:30011"/>
        <dbReference type="EC" id="3.5.1.44"/>
    </reaction>
</comment>
<comment type="subcellular location">
    <subcellularLocation>
        <location evidence="1">Cytoplasm</location>
    </subcellularLocation>
</comment>
<comment type="domain">
    <text evidence="1">Contains a C-terminal catalytic domain, and an N-terminal region which modulates catalytic activity.</text>
</comment>
<comment type="PTM">
    <text evidence="1">Phosphorylated by CheA. Phosphorylation of the N-terminal regulatory domain activates the methylesterase activity.</text>
</comment>
<comment type="similarity">
    <text evidence="1">Belongs to the CheB family.</text>
</comment>
<organism>
    <name type="scientific">Burkholderia thailandensis (strain ATCC 700388 / DSM 13276 / CCUG 48851 / CIP 106301 / E264)</name>
    <dbReference type="NCBI Taxonomy" id="271848"/>
    <lineage>
        <taxon>Bacteria</taxon>
        <taxon>Pseudomonadati</taxon>
        <taxon>Pseudomonadota</taxon>
        <taxon>Betaproteobacteria</taxon>
        <taxon>Burkholderiales</taxon>
        <taxon>Burkholderiaceae</taxon>
        <taxon>Burkholderia</taxon>
        <taxon>pseudomallei group</taxon>
    </lineage>
</organism>
<proteinExistence type="inferred from homology"/>
<name>CHEB3_BURTA</name>
<feature type="chain" id="PRO_0000264269" description="Protein-glutamate methylesterase/protein-glutamine glutaminase 3">
    <location>
        <begin position="1"/>
        <end position="360"/>
    </location>
</feature>
<feature type="domain" description="Response regulatory" evidence="1">
    <location>
        <begin position="14"/>
        <end position="131"/>
    </location>
</feature>
<feature type="domain" description="CheB-type methylesterase" evidence="1">
    <location>
        <begin position="169"/>
        <end position="360"/>
    </location>
</feature>
<feature type="active site" evidence="1">
    <location>
        <position position="181"/>
    </location>
</feature>
<feature type="active site" evidence="1">
    <location>
        <position position="207"/>
    </location>
</feature>
<feature type="active site" evidence="1">
    <location>
        <position position="303"/>
    </location>
</feature>
<feature type="modified residue" description="4-aspartylphosphate" evidence="1">
    <location>
        <position position="65"/>
    </location>
</feature>
<protein>
    <recommendedName>
        <fullName evidence="1">Protein-glutamate methylesterase/protein-glutamine glutaminase 3</fullName>
        <ecNumber evidence="1">3.1.1.61</ecNumber>
        <ecNumber evidence="1">3.5.1.44</ecNumber>
    </recommendedName>
</protein>
<dbReference type="EC" id="3.1.1.61" evidence="1"/>
<dbReference type="EC" id="3.5.1.44" evidence="1"/>
<dbReference type="EMBL" id="CP000085">
    <property type="protein sequence ID" value="ABC34755.1"/>
    <property type="molecule type" value="Genomic_DNA"/>
</dbReference>
<dbReference type="SMR" id="Q2T8Y5"/>
<dbReference type="KEGG" id="bte:BTH_II0162"/>
<dbReference type="HOGENOM" id="CLU_000445_51_0_4"/>
<dbReference type="Proteomes" id="UP000001930">
    <property type="component" value="Chromosome II"/>
</dbReference>
<dbReference type="GO" id="GO:0005737">
    <property type="term" value="C:cytoplasm"/>
    <property type="evidence" value="ECO:0007669"/>
    <property type="project" value="UniProtKB-SubCell"/>
</dbReference>
<dbReference type="GO" id="GO:0000156">
    <property type="term" value="F:phosphorelay response regulator activity"/>
    <property type="evidence" value="ECO:0007669"/>
    <property type="project" value="InterPro"/>
</dbReference>
<dbReference type="GO" id="GO:0008984">
    <property type="term" value="F:protein-glutamate methylesterase activity"/>
    <property type="evidence" value="ECO:0007669"/>
    <property type="project" value="UniProtKB-UniRule"/>
</dbReference>
<dbReference type="GO" id="GO:0050568">
    <property type="term" value="F:protein-glutamine glutaminase activity"/>
    <property type="evidence" value="ECO:0007669"/>
    <property type="project" value="UniProtKB-UniRule"/>
</dbReference>
<dbReference type="GO" id="GO:0006935">
    <property type="term" value="P:chemotaxis"/>
    <property type="evidence" value="ECO:0007669"/>
    <property type="project" value="UniProtKB-UniRule"/>
</dbReference>
<dbReference type="CDD" id="cd16432">
    <property type="entry name" value="CheB_Rec"/>
    <property type="match status" value="1"/>
</dbReference>
<dbReference type="CDD" id="cd17541">
    <property type="entry name" value="REC_CheB-like"/>
    <property type="match status" value="1"/>
</dbReference>
<dbReference type="Gene3D" id="3.40.50.2300">
    <property type="match status" value="1"/>
</dbReference>
<dbReference type="Gene3D" id="3.40.50.180">
    <property type="entry name" value="Methylesterase CheB, C-terminal domain"/>
    <property type="match status" value="1"/>
</dbReference>
<dbReference type="HAMAP" id="MF_00099">
    <property type="entry name" value="CheB_chemtxs"/>
    <property type="match status" value="1"/>
</dbReference>
<dbReference type="InterPro" id="IPR008248">
    <property type="entry name" value="CheB-like"/>
</dbReference>
<dbReference type="InterPro" id="IPR035909">
    <property type="entry name" value="CheB_C"/>
</dbReference>
<dbReference type="InterPro" id="IPR011006">
    <property type="entry name" value="CheY-like_superfamily"/>
</dbReference>
<dbReference type="InterPro" id="IPR000673">
    <property type="entry name" value="Sig_transdc_resp-reg_Me-estase"/>
</dbReference>
<dbReference type="InterPro" id="IPR001789">
    <property type="entry name" value="Sig_transdc_resp-reg_receiver"/>
</dbReference>
<dbReference type="NCBIfam" id="NF001965">
    <property type="entry name" value="PRK00742.1"/>
    <property type="match status" value="1"/>
</dbReference>
<dbReference type="PANTHER" id="PTHR42872">
    <property type="entry name" value="PROTEIN-GLUTAMATE METHYLESTERASE/PROTEIN-GLUTAMINE GLUTAMINASE"/>
    <property type="match status" value="1"/>
</dbReference>
<dbReference type="PANTHER" id="PTHR42872:SF6">
    <property type="entry name" value="PROTEIN-GLUTAMATE METHYLESTERASE_PROTEIN-GLUTAMINE GLUTAMINASE"/>
    <property type="match status" value="1"/>
</dbReference>
<dbReference type="Pfam" id="PF01339">
    <property type="entry name" value="CheB_methylest"/>
    <property type="match status" value="1"/>
</dbReference>
<dbReference type="Pfam" id="PF00072">
    <property type="entry name" value="Response_reg"/>
    <property type="match status" value="1"/>
</dbReference>
<dbReference type="PIRSF" id="PIRSF000876">
    <property type="entry name" value="RR_chemtxs_CheB"/>
    <property type="match status" value="1"/>
</dbReference>
<dbReference type="SMART" id="SM00448">
    <property type="entry name" value="REC"/>
    <property type="match status" value="1"/>
</dbReference>
<dbReference type="SUPFAM" id="SSF52172">
    <property type="entry name" value="CheY-like"/>
    <property type="match status" value="1"/>
</dbReference>
<dbReference type="SUPFAM" id="SSF52738">
    <property type="entry name" value="Methylesterase CheB, C-terminal domain"/>
    <property type="match status" value="1"/>
</dbReference>
<dbReference type="PROSITE" id="PS50122">
    <property type="entry name" value="CHEB"/>
    <property type="match status" value="1"/>
</dbReference>
<dbReference type="PROSITE" id="PS50110">
    <property type="entry name" value="RESPONSE_REGULATORY"/>
    <property type="match status" value="1"/>
</dbReference>
<sequence>MTEFSSKERYTMIRVLVIDDSATMRILLKKLIDKNEHMECVGVAPNPVAAQELLRETRPDVITLDIEMPKMNGLDFLDRIMRLMPVAVIMISTLTEAGSESALRALELGAIDFIAKPKLDFAEGVQAYAEEIYRKIETAGRAKVKKLTRDVPPVRMDAEPPAKPLLAEAGKDGRVVAVGASTGGTEAVKELLLSLPADCPPLLIAQHMPEPFMRSLAKRLDLLCAMRVKMAEDGETLRRGCVYIAPGHSNLTIDATAAGYVCRIVRNAGEAQSDSSVDELFRSVAAAAGARGVGIVLTGSGSDGAAGARAMMAAGAFNIAQDAETSVVYSMPDAAIAACGINEVLPLEKIAGKLMELDGA</sequence>
<accession>Q2T8Y5</accession>
<reference key="1">
    <citation type="journal article" date="2005" name="BMC Genomics">
        <title>Bacterial genome adaptation to niches: divergence of the potential virulence genes in three Burkholderia species of different survival strategies.</title>
        <authorList>
            <person name="Kim H.S."/>
            <person name="Schell M.A."/>
            <person name="Yu Y."/>
            <person name="Ulrich R.L."/>
            <person name="Sarria S.H."/>
            <person name="Nierman W.C."/>
            <person name="DeShazer D."/>
        </authorList>
    </citation>
    <scope>NUCLEOTIDE SEQUENCE [LARGE SCALE GENOMIC DNA]</scope>
    <source>
        <strain>ATCC 700388 / DSM 13276 / CCUG 48851 / CIP 106301 / E264</strain>
    </source>
</reference>
<gene>
    <name evidence="1" type="primary">cheB3</name>
    <name type="ordered locus">BTH_II0162</name>
</gene>
<evidence type="ECO:0000255" key="1">
    <source>
        <dbReference type="HAMAP-Rule" id="MF_00099"/>
    </source>
</evidence>